<evidence type="ECO:0000255" key="1">
    <source>
        <dbReference type="HAMAP-Rule" id="MF_00504"/>
    </source>
</evidence>
<reference key="1">
    <citation type="journal article" date="2006" name="J. Bacteriol.">
        <title>Complete genome sequence of Yersinia pestis strains Antiqua and Nepal516: evidence of gene reduction in an emerging pathogen.</title>
        <authorList>
            <person name="Chain P.S.G."/>
            <person name="Hu P."/>
            <person name="Malfatti S.A."/>
            <person name="Radnedge L."/>
            <person name="Larimer F."/>
            <person name="Vergez L.M."/>
            <person name="Worsham P."/>
            <person name="Chu M.C."/>
            <person name="Andersen G.L."/>
        </authorList>
    </citation>
    <scope>NUCLEOTIDE SEQUENCE [LARGE SCALE GENOMIC DNA]</scope>
    <source>
        <strain>Antiqua</strain>
    </source>
</reference>
<proteinExistence type="inferred from homology"/>
<sequence>MTTEIMQISLSHNPADARWGEKALISTNDQGVTIHLTSHDQLGGIQRAARKIDGQGIKQVKLAGEGWGLEQSWAFWQGFRGPKGQRSVVWAELPANEKTELEQRLKIIDWVRDTINAPAEDLGPEQLAKNAIDLLCAVSCDAVSYRITKGEDLREQNYAGIYTVGRGSDRAPVLLALDYNPTGNPDAPVMACLVGKGITFDSGGYSLKQSAFMDSMKSDMGGAATLTGALALAAARGLKERVKLYLCCADNMVSGNAFKLGDIIRYRNGKTVEIMNTDAEGRLVLADGLIDASEQNAPLIIDAATLTGAAKTALGNDYHALFSFDDELAQALLNSAHSEHELFWRLPLAEFHRSQLPSNFAELNNVAGGAYSAGASTAAAFLSHFVKNYQQGWLHIDCSATYRKSAVDQWSAGATGLGVRTVANLLLAQAKQ</sequence>
<comment type="function">
    <text evidence="1">Probably plays an important role in intracellular peptide degradation.</text>
</comment>
<comment type="catalytic activity">
    <reaction evidence="1">
        <text>Release of an N-terminal amino acid, Xaa, from a peptide or arylamide. Xaa is preferably Glu or Asp but may be other amino acids, including Leu, Met, His, Cys and Gln.</text>
        <dbReference type="EC" id="3.4.11.23"/>
    </reaction>
</comment>
<comment type="cofactor">
    <cofactor evidence="1">
        <name>Mn(2+)</name>
        <dbReference type="ChEBI" id="CHEBI:29035"/>
    </cofactor>
    <text evidence="1">Binds 2 manganese ions per subunit.</text>
</comment>
<comment type="subunit">
    <text evidence="1">Homohexamer.</text>
</comment>
<comment type="subcellular location">
    <subcellularLocation>
        <location evidence="1">Cytoplasm</location>
    </subcellularLocation>
</comment>
<comment type="similarity">
    <text evidence="1">Belongs to the peptidase M17 family.</text>
</comment>
<protein>
    <recommendedName>
        <fullName evidence="1">Peptidase B</fullName>
        <ecNumber evidence="1">3.4.11.23</ecNumber>
    </recommendedName>
    <alternativeName>
        <fullName evidence="1">Aminopeptidase B</fullName>
    </alternativeName>
</protein>
<keyword id="KW-0031">Aminopeptidase</keyword>
<keyword id="KW-0963">Cytoplasm</keyword>
<keyword id="KW-0378">Hydrolase</keyword>
<keyword id="KW-0464">Manganese</keyword>
<keyword id="KW-0479">Metal-binding</keyword>
<keyword id="KW-0645">Protease</keyword>
<gene>
    <name evidence="1" type="primary">pepB</name>
    <name type="ordered locus">YPA_2330</name>
</gene>
<accession>Q1C5H7</accession>
<name>PEPB_YERPA</name>
<organism>
    <name type="scientific">Yersinia pestis bv. Antiqua (strain Antiqua)</name>
    <dbReference type="NCBI Taxonomy" id="360102"/>
    <lineage>
        <taxon>Bacteria</taxon>
        <taxon>Pseudomonadati</taxon>
        <taxon>Pseudomonadota</taxon>
        <taxon>Gammaproteobacteria</taxon>
        <taxon>Enterobacterales</taxon>
        <taxon>Yersiniaceae</taxon>
        <taxon>Yersinia</taxon>
    </lineage>
</organism>
<feature type="chain" id="PRO_0000258500" description="Peptidase B">
    <location>
        <begin position="1"/>
        <end position="432"/>
    </location>
</feature>
<feature type="active site" evidence="1">
    <location>
        <position position="208"/>
    </location>
</feature>
<feature type="active site" evidence="1">
    <location>
        <position position="282"/>
    </location>
</feature>
<feature type="binding site" evidence="1">
    <location>
        <position position="196"/>
    </location>
    <ligand>
        <name>Mn(2+)</name>
        <dbReference type="ChEBI" id="CHEBI:29035"/>
        <label>2</label>
    </ligand>
</feature>
<feature type="binding site" evidence="1">
    <location>
        <position position="201"/>
    </location>
    <ligand>
        <name>Mn(2+)</name>
        <dbReference type="ChEBI" id="CHEBI:29035"/>
        <label>1</label>
    </ligand>
</feature>
<feature type="binding site" evidence="1">
    <location>
        <position position="201"/>
    </location>
    <ligand>
        <name>Mn(2+)</name>
        <dbReference type="ChEBI" id="CHEBI:29035"/>
        <label>2</label>
    </ligand>
</feature>
<feature type="binding site" evidence="1">
    <location>
        <position position="219"/>
    </location>
    <ligand>
        <name>Mn(2+)</name>
        <dbReference type="ChEBI" id="CHEBI:29035"/>
        <label>2</label>
    </ligand>
</feature>
<feature type="binding site" evidence="1">
    <location>
        <position position="278"/>
    </location>
    <ligand>
        <name>Mn(2+)</name>
        <dbReference type="ChEBI" id="CHEBI:29035"/>
        <label>1</label>
    </ligand>
</feature>
<feature type="binding site" evidence="1">
    <location>
        <position position="280"/>
    </location>
    <ligand>
        <name>Mn(2+)</name>
        <dbReference type="ChEBI" id="CHEBI:29035"/>
        <label>1</label>
    </ligand>
</feature>
<feature type="binding site" evidence="1">
    <location>
        <position position="280"/>
    </location>
    <ligand>
        <name>Mn(2+)</name>
        <dbReference type="ChEBI" id="CHEBI:29035"/>
        <label>2</label>
    </ligand>
</feature>
<dbReference type="EC" id="3.4.11.23" evidence="1"/>
<dbReference type="EMBL" id="CP000308">
    <property type="protein sequence ID" value="ABG14295.1"/>
    <property type="molecule type" value="Genomic_DNA"/>
</dbReference>
<dbReference type="RefSeq" id="WP_002209829.1">
    <property type="nucleotide sequence ID" value="NZ_CP009906.1"/>
</dbReference>
<dbReference type="SMR" id="Q1C5H7"/>
<dbReference type="MEROPS" id="M17.004"/>
<dbReference type="GeneID" id="57975846"/>
<dbReference type="KEGG" id="ypa:YPA_2330"/>
<dbReference type="Proteomes" id="UP000001971">
    <property type="component" value="Chromosome"/>
</dbReference>
<dbReference type="GO" id="GO:0005737">
    <property type="term" value="C:cytoplasm"/>
    <property type="evidence" value="ECO:0007669"/>
    <property type="project" value="UniProtKB-SubCell"/>
</dbReference>
<dbReference type="GO" id="GO:0030145">
    <property type="term" value="F:manganese ion binding"/>
    <property type="evidence" value="ECO:0007669"/>
    <property type="project" value="UniProtKB-UniRule"/>
</dbReference>
<dbReference type="GO" id="GO:0070006">
    <property type="term" value="F:metalloaminopeptidase activity"/>
    <property type="evidence" value="ECO:0007669"/>
    <property type="project" value="InterPro"/>
</dbReference>
<dbReference type="GO" id="GO:0006508">
    <property type="term" value="P:proteolysis"/>
    <property type="evidence" value="ECO:0007669"/>
    <property type="project" value="UniProtKB-UniRule"/>
</dbReference>
<dbReference type="CDD" id="cd00433">
    <property type="entry name" value="Peptidase_M17"/>
    <property type="match status" value="1"/>
</dbReference>
<dbReference type="FunFam" id="3.40.630.10:FF:000037">
    <property type="entry name" value="Peptidase B"/>
    <property type="match status" value="1"/>
</dbReference>
<dbReference type="Gene3D" id="3.40.630.10">
    <property type="entry name" value="Zn peptidases"/>
    <property type="match status" value="1"/>
</dbReference>
<dbReference type="HAMAP" id="MF_00504">
    <property type="entry name" value="Aminopeptidase_M17"/>
    <property type="match status" value="1"/>
</dbReference>
<dbReference type="InterPro" id="IPR011356">
    <property type="entry name" value="Leucine_aapep/pepB"/>
</dbReference>
<dbReference type="InterPro" id="IPR047620">
    <property type="entry name" value="M17_PepB-like_N"/>
</dbReference>
<dbReference type="InterPro" id="IPR008330">
    <property type="entry name" value="Pept_M17_PepB"/>
</dbReference>
<dbReference type="InterPro" id="IPR000819">
    <property type="entry name" value="Peptidase_M17_C"/>
</dbReference>
<dbReference type="NCBIfam" id="NF003450">
    <property type="entry name" value="PRK05015.1"/>
    <property type="match status" value="1"/>
</dbReference>
<dbReference type="PANTHER" id="PTHR11963">
    <property type="entry name" value="LEUCINE AMINOPEPTIDASE-RELATED"/>
    <property type="match status" value="1"/>
</dbReference>
<dbReference type="PANTHER" id="PTHR11963:SF20">
    <property type="entry name" value="PEPTIDASE B"/>
    <property type="match status" value="1"/>
</dbReference>
<dbReference type="Pfam" id="PF12404">
    <property type="entry name" value="DUF3663"/>
    <property type="match status" value="1"/>
</dbReference>
<dbReference type="Pfam" id="PF00883">
    <property type="entry name" value="Peptidase_M17"/>
    <property type="match status" value="1"/>
</dbReference>
<dbReference type="PIRSF" id="PIRSF036388">
    <property type="entry name" value="Ctsl_amnpptdse_B"/>
    <property type="match status" value="1"/>
</dbReference>
<dbReference type="PRINTS" id="PR00481">
    <property type="entry name" value="LAMNOPPTDASE"/>
</dbReference>
<dbReference type="SUPFAM" id="SSF53187">
    <property type="entry name" value="Zn-dependent exopeptidases"/>
    <property type="match status" value="1"/>
</dbReference>
<dbReference type="PROSITE" id="PS00631">
    <property type="entry name" value="CYTOSOL_AP"/>
    <property type="match status" value="1"/>
</dbReference>